<evidence type="ECO:0000250" key="1">
    <source>
        <dbReference type="UniProtKB" id="P04798"/>
    </source>
</evidence>
<evidence type="ECO:0000255" key="2"/>
<evidence type="ECO:0000255" key="3">
    <source>
        <dbReference type="PROSITE-ProRule" id="PRU00498"/>
    </source>
</evidence>
<evidence type="ECO:0000269" key="4">
    <source>
    </source>
</evidence>
<evidence type="ECO:0000303" key="5">
    <source>
    </source>
</evidence>
<evidence type="ECO:0000305" key="6"/>
<evidence type="ECO:0000305" key="7">
    <source>
    </source>
</evidence>
<evidence type="ECO:0000305" key="8">
    <source>
    </source>
</evidence>
<keyword id="KW-0325">Glycoprotein</keyword>
<keyword id="KW-0408">Iron</keyword>
<keyword id="KW-0472">Membrane</keyword>
<keyword id="KW-0479">Metal-binding</keyword>
<keyword id="KW-0503">Monooxygenase</keyword>
<keyword id="KW-0560">Oxidoreductase</keyword>
<keyword id="KW-0812">Transmembrane</keyword>
<keyword id="KW-1133">Transmembrane helix</keyword>
<reference key="1">
    <citation type="journal article" date="2015" name="Genome Announc.">
        <title>Genome sequence of Aspergillus flavus NRRL 3357, a strain that causes aflatoxin contamination of food and feed.</title>
        <authorList>
            <person name="Nierman W.C."/>
            <person name="Yu J."/>
            <person name="Fedorova-Abrams N.D."/>
            <person name="Losada L."/>
            <person name="Cleveland T.E."/>
            <person name="Bhatnagar D."/>
            <person name="Bennett J.W."/>
            <person name="Dean R."/>
            <person name="Payne G.A."/>
        </authorList>
    </citation>
    <scope>NUCLEOTIDE SEQUENCE [LARGE SCALE GENOMIC DNA]</scope>
    <source>
        <strain>ATCC 200026 / FGSC A1120 / IAM 13836 / NRRL 3357 / JCM 12722 / SRRC 167</strain>
    </source>
</reference>
<reference key="2">
    <citation type="journal article" date="2010" name="Mol. Plant Pathol.">
        <title>Beyond aflatoxin: four distinct expression patterns and functional roles associated with Aspergillus flavus secondary metabolism gene clusters.</title>
        <authorList>
            <person name="Georgianna D.R."/>
            <person name="Fedorova N.D."/>
            <person name="Burroughs J.L."/>
            <person name="Dolezal A.L."/>
            <person name="Bok J.W."/>
            <person name="Horowitz-Brown S."/>
            <person name="Woloshuk C.P."/>
            <person name="Yu J."/>
            <person name="Keller N.P."/>
            <person name="Payne G.A."/>
        </authorList>
    </citation>
    <scope>IDENTIFICATION OF THE GENE CLUSTER 23</scope>
    <scope>FUNCTION</scope>
</reference>
<reference key="3">
    <citation type="journal article" date="2015" name="Fungal Genet. Biol.">
        <title>An Aspergillus flavus secondary metabolic gene cluster containing a hybrid PKS-NRPS is necessary for synthesis of the 2-pyridones, leporins.</title>
        <authorList>
            <person name="Cary J.W."/>
            <person name="Uka V."/>
            <person name="Han Z."/>
            <person name="Buyst D."/>
            <person name="Harris-Coward P.Y."/>
            <person name="Ehrlich K.C."/>
            <person name="Wei Q."/>
            <person name="Bhatnagar D."/>
            <person name="Dowd P.F."/>
            <person name="Martens S.L."/>
            <person name="Calvo A.M."/>
            <person name="Martins J.C."/>
            <person name="Vanhaecke L."/>
            <person name="Coenye T."/>
            <person name="De Saeger S."/>
            <person name="Di Mavungu J.D."/>
        </authorList>
    </citation>
    <scope>FUNCTION</scope>
    <scope>DISRUPTION PHENOTYPE</scope>
    <scope>PATHWAY</scope>
</reference>
<protein>
    <recommendedName>
        <fullName evidence="5">Cytochrome P450 monooxygenase lepD</fullName>
        <ecNumber evidence="8">1.-.-.-</ecNumber>
    </recommendedName>
    <alternativeName>
        <fullName evidence="5">Leporins biosynthesis protein D</fullName>
    </alternativeName>
</protein>
<feature type="chain" id="PRO_0000438449" description="Cytochrome P450 monooxygenase lepD">
    <location>
        <begin position="1"/>
        <end position="508"/>
    </location>
</feature>
<feature type="transmembrane region" description="Helical" evidence="2">
    <location>
        <begin position="22"/>
        <end position="42"/>
    </location>
</feature>
<feature type="binding site" description="axial binding residue" evidence="1">
    <location>
        <position position="454"/>
    </location>
    <ligand>
        <name>heme</name>
        <dbReference type="ChEBI" id="CHEBI:30413"/>
    </ligand>
    <ligandPart>
        <name>Fe</name>
        <dbReference type="ChEBI" id="CHEBI:18248"/>
    </ligandPart>
</feature>
<feature type="glycosylation site" description="N-linked (GlcNAc...) asparagine" evidence="3">
    <location>
        <position position="53"/>
    </location>
</feature>
<feature type="glycosylation site" description="N-linked (GlcNAc...) asparagine" evidence="3">
    <location>
        <position position="416"/>
    </location>
</feature>
<dbReference type="EC" id="1.-.-.-" evidence="8"/>
<dbReference type="EMBL" id="EQ963479">
    <property type="protein sequence ID" value="EED49867.1"/>
    <property type="molecule type" value="Genomic_DNA"/>
</dbReference>
<dbReference type="RefSeq" id="XP_002380248.1">
    <property type="nucleotide sequence ID" value="XM_002380207.1"/>
</dbReference>
<dbReference type="SMR" id="B8NJG8"/>
<dbReference type="STRING" id="332952.B8NJG8"/>
<dbReference type="GlyCosmos" id="B8NJG8">
    <property type="glycosylation" value="2 sites, No reported glycans"/>
</dbReference>
<dbReference type="EnsemblFungi" id="EED49867">
    <property type="protein sequence ID" value="EED49867"/>
    <property type="gene ID" value="AFLA_066890"/>
</dbReference>
<dbReference type="VEuPathDB" id="FungiDB:AFLA_008626"/>
<dbReference type="eggNOG" id="KOG0157">
    <property type="taxonomic scope" value="Eukaryota"/>
</dbReference>
<dbReference type="HOGENOM" id="CLU_042557_0_0_1"/>
<dbReference type="OMA" id="REMILNW"/>
<dbReference type="BioCyc" id="MetaCyc:MONOMER-22096"/>
<dbReference type="GO" id="GO:0016020">
    <property type="term" value="C:membrane"/>
    <property type="evidence" value="ECO:0007669"/>
    <property type="project" value="UniProtKB-SubCell"/>
</dbReference>
<dbReference type="GO" id="GO:0020037">
    <property type="term" value="F:heme binding"/>
    <property type="evidence" value="ECO:0007669"/>
    <property type="project" value="InterPro"/>
</dbReference>
<dbReference type="GO" id="GO:0005506">
    <property type="term" value="F:iron ion binding"/>
    <property type="evidence" value="ECO:0007669"/>
    <property type="project" value="InterPro"/>
</dbReference>
<dbReference type="GO" id="GO:0004497">
    <property type="term" value="F:monooxygenase activity"/>
    <property type="evidence" value="ECO:0007669"/>
    <property type="project" value="UniProtKB-KW"/>
</dbReference>
<dbReference type="GO" id="GO:0016705">
    <property type="term" value="F:oxidoreductase activity, acting on paired donors, with incorporation or reduction of molecular oxygen"/>
    <property type="evidence" value="ECO:0007669"/>
    <property type="project" value="InterPro"/>
</dbReference>
<dbReference type="GO" id="GO:0044550">
    <property type="term" value="P:secondary metabolite biosynthetic process"/>
    <property type="evidence" value="ECO:0007669"/>
    <property type="project" value="UniProtKB-ARBA"/>
</dbReference>
<dbReference type="CDD" id="cd20615">
    <property type="entry name" value="CYP_GliC-like"/>
    <property type="match status" value="1"/>
</dbReference>
<dbReference type="Gene3D" id="1.10.630.10">
    <property type="entry name" value="Cytochrome P450"/>
    <property type="match status" value="1"/>
</dbReference>
<dbReference type="InterPro" id="IPR001128">
    <property type="entry name" value="Cyt_P450"/>
</dbReference>
<dbReference type="InterPro" id="IPR036396">
    <property type="entry name" value="Cyt_P450_sf"/>
</dbReference>
<dbReference type="InterPro" id="IPR050121">
    <property type="entry name" value="Cytochrome_P450_monoxygenase"/>
</dbReference>
<dbReference type="PANTHER" id="PTHR24305">
    <property type="entry name" value="CYTOCHROME P450"/>
    <property type="match status" value="1"/>
</dbReference>
<dbReference type="PANTHER" id="PTHR24305:SF235">
    <property type="entry name" value="CYTOCHROME P450 MONOOXYGENASE APDB-RELATED"/>
    <property type="match status" value="1"/>
</dbReference>
<dbReference type="Pfam" id="PF00067">
    <property type="entry name" value="p450"/>
    <property type="match status" value="1"/>
</dbReference>
<dbReference type="SUPFAM" id="SSF48264">
    <property type="entry name" value="Cytochrome P450"/>
    <property type="match status" value="1"/>
</dbReference>
<comment type="function">
    <text evidence="4 7">Cytochrome P450 monooxygenase; part of the gene cluster 23 that mediates the biosynthesis of a family of 2-pyridones known as leporins (PubMed:20447271, PubMed:26051490). The hybrid PKS-NRPS synthetase lepA and the enoyl reductase lepG are responsible for fusion of phenylalanine with a hexaketide and subsequent release of the stable tetramic acid precursor, pre-leporin C (PubMed:26051490). Because lepA lacks a designated enoylreductase (ER) domain, the required activity is provided the enoyl reductase lepG (PubMed:26051490). It is possible that the dehydrogenase lepF also participates in production of pre-leporin C (PubMed:26051490). Cytochrome P450 monooxygenase lepH is then required for the ring expansion step to yield leporin C (PubMed:26051490). Leporin C is then presumably further oxidized by the N-hydroxylase lepD to form leporin B (PubMed:26051490). LepI may possess a function in biosynthesis upstream of lepA (PubMed:26051490). Leporin B is further oxidized in the presence of ferric ion to give the leporin B trimer-iron chelate, but whether or not this reaction is catalyzed by an enzyme in the pathway or by ferric ion is not determined yet (PubMed:26051490).</text>
</comment>
<comment type="cofactor">
    <cofactor evidence="1">
        <name>heme</name>
        <dbReference type="ChEBI" id="CHEBI:30413"/>
    </cofactor>
</comment>
<comment type="subcellular location">
    <subcellularLocation>
        <location evidence="2">Membrane</location>
        <topology evidence="2">Single-pass membrane protein</topology>
    </subcellularLocation>
</comment>
<comment type="disruption phenotype">
    <text evidence="4">Leads to normal accumulation of leporin C accumulated but to 30-fold reduced production of leporin B (PubMed:26051490).</text>
</comment>
<comment type="similarity">
    <text evidence="6">Belongs to the cytochrome P450 family.</text>
</comment>
<organism>
    <name type="scientific">Aspergillus flavus (strain ATCC 200026 / FGSC A1120 / IAM 13836 / NRRL 3357 / JCM 12722 / SRRC 167)</name>
    <dbReference type="NCBI Taxonomy" id="332952"/>
    <lineage>
        <taxon>Eukaryota</taxon>
        <taxon>Fungi</taxon>
        <taxon>Dikarya</taxon>
        <taxon>Ascomycota</taxon>
        <taxon>Pezizomycotina</taxon>
        <taxon>Eurotiomycetes</taxon>
        <taxon>Eurotiomycetidae</taxon>
        <taxon>Eurotiales</taxon>
        <taxon>Aspergillaceae</taxon>
        <taxon>Aspergillus</taxon>
        <taxon>Aspergillus subgen. Circumdati</taxon>
    </lineage>
</organism>
<proteinExistence type="inferred from homology"/>
<accession>B8NJG8</accession>
<sequence>MASPMKSDFLAGSHMKLPKIGIAAAVAVVASIVIYLALSSFFVGTDEFKNDENQSIKEYPDNTRFMRFTHGKQLSKAGEDLAGSEPYLVRNGKSKELVIFAPEHLQEFHRKDANSHYKPENMNMGDYAGQLLGQCVGQLGGTKWKLARSHMDPEFSYRASRSMMKRFSQEIDSWVSHLSENPTRRSTQKDVFVQDVKKRCKDLSLRSIAISIYGETFSEENYAFLSTMNELHEKIIFVAFLNKRVMSKWYNKLPTAEKRLMDSFQTQWKAFNLAQIKLAREKKLSCPAEKIYVGVEAGDMSLPEFLQSLDEMLFTNIDITGSILALIFQHLAKDQAMQKKLRAEISAHRAQPGYTVGDYISKQNTLLHFSLLESIRVTPAMYFTLPECNASPKRIGGFHIPAHTPTIVDVNRLNKNESIWGTEADAFRPERFFGLDPARYRFGFVRWGIGRDKCLGKNMAEVILKLAILAVTDKYTLHVPPALPGQGEKSEAGFTINRDVEVEFRPAI</sequence>
<gene>
    <name evidence="5" type="primary">lepD</name>
    <name type="ORF">AFLA_066890</name>
</gene>
<name>LEPD_ASPFN</name>